<reference key="1">
    <citation type="journal article" date="1999" name="Nature">
        <title>Sequence and analysis of chromosome 2 of the plant Arabidopsis thaliana.</title>
        <authorList>
            <person name="Lin X."/>
            <person name="Kaul S."/>
            <person name="Rounsley S.D."/>
            <person name="Shea T.P."/>
            <person name="Benito M.-I."/>
            <person name="Town C.D."/>
            <person name="Fujii C.Y."/>
            <person name="Mason T.M."/>
            <person name="Bowman C.L."/>
            <person name="Barnstead M.E."/>
            <person name="Feldblyum T.V."/>
            <person name="Buell C.R."/>
            <person name="Ketchum K.A."/>
            <person name="Lee J.J."/>
            <person name="Ronning C.M."/>
            <person name="Koo H.L."/>
            <person name="Moffat K.S."/>
            <person name="Cronin L.A."/>
            <person name="Shen M."/>
            <person name="Pai G."/>
            <person name="Van Aken S."/>
            <person name="Umayam L."/>
            <person name="Tallon L.J."/>
            <person name="Gill J.E."/>
            <person name="Adams M.D."/>
            <person name="Carrera A.J."/>
            <person name="Creasy T.H."/>
            <person name="Goodman H.M."/>
            <person name="Somerville C.R."/>
            <person name="Copenhaver G.P."/>
            <person name="Preuss D."/>
            <person name="Nierman W.C."/>
            <person name="White O."/>
            <person name="Eisen J.A."/>
            <person name="Salzberg S.L."/>
            <person name="Fraser C.M."/>
            <person name="Venter J.C."/>
        </authorList>
    </citation>
    <scope>NUCLEOTIDE SEQUENCE [LARGE SCALE GENOMIC DNA]</scope>
    <source>
        <strain>cv. Columbia</strain>
    </source>
</reference>
<reference key="2">
    <citation type="journal article" date="2017" name="Plant J.">
        <title>Araport11: a complete reannotation of the Arabidopsis thaliana reference genome.</title>
        <authorList>
            <person name="Cheng C.Y."/>
            <person name="Krishnakumar V."/>
            <person name="Chan A.P."/>
            <person name="Thibaud-Nissen F."/>
            <person name="Schobel S."/>
            <person name="Town C.D."/>
        </authorList>
    </citation>
    <scope>GENOME REANNOTATION</scope>
    <source>
        <strain>cv. Columbia</strain>
    </source>
</reference>
<reference key="3">
    <citation type="journal article" date="2002" name="Science">
        <title>Functional annotation of a full-length Arabidopsis cDNA collection.</title>
        <authorList>
            <person name="Seki M."/>
            <person name="Narusaka M."/>
            <person name="Kamiya A."/>
            <person name="Ishida J."/>
            <person name="Satou M."/>
            <person name="Sakurai T."/>
            <person name="Nakajima M."/>
            <person name="Enju A."/>
            <person name="Akiyama K."/>
            <person name="Oono Y."/>
            <person name="Muramatsu M."/>
            <person name="Hayashizaki Y."/>
            <person name="Kawai J."/>
            <person name="Carninci P."/>
            <person name="Itoh M."/>
            <person name="Ishii Y."/>
            <person name="Arakawa T."/>
            <person name="Shibata K."/>
            <person name="Shinagawa A."/>
            <person name="Shinozaki K."/>
        </authorList>
    </citation>
    <scope>NUCLEOTIDE SEQUENCE [LARGE SCALE MRNA]</scope>
    <source>
        <strain>cv. Columbia</strain>
    </source>
</reference>
<reference key="4">
    <citation type="journal article" date="2003" name="Science">
        <title>Empirical analysis of transcriptional activity in the Arabidopsis genome.</title>
        <authorList>
            <person name="Yamada K."/>
            <person name="Lim J."/>
            <person name="Dale J.M."/>
            <person name="Chen H."/>
            <person name="Shinn P."/>
            <person name="Palm C.J."/>
            <person name="Southwick A.M."/>
            <person name="Wu H.C."/>
            <person name="Kim C.J."/>
            <person name="Nguyen M."/>
            <person name="Pham P.K."/>
            <person name="Cheuk R.F."/>
            <person name="Karlin-Newmann G."/>
            <person name="Liu S.X."/>
            <person name="Lam B."/>
            <person name="Sakano H."/>
            <person name="Wu T."/>
            <person name="Yu G."/>
            <person name="Miranda M."/>
            <person name="Quach H.L."/>
            <person name="Tripp M."/>
            <person name="Chang C.H."/>
            <person name="Lee J.M."/>
            <person name="Toriumi M.J."/>
            <person name="Chan M.M."/>
            <person name="Tang C.C."/>
            <person name="Onodera C.S."/>
            <person name="Deng J.M."/>
            <person name="Akiyama K."/>
            <person name="Ansari Y."/>
            <person name="Arakawa T."/>
            <person name="Banh J."/>
            <person name="Banno F."/>
            <person name="Bowser L."/>
            <person name="Brooks S.Y."/>
            <person name="Carninci P."/>
            <person name="Chao Q."/>
            <person name="Choy N."/>
            <person name="Enju A."/>
            <person name="Goldsmith A.D."/>
            <person name="Gurjal M."/>
            <person name="Hansen N.F."/>
            <person name="Hayashizaki Y."/>
            <person name="Johnson-Hopson C."/>
            <person name="Hsuan V.W."/>
            <person name="Iida K."/>
            <person name="Karnes M."/>
            <person name="Khan S."/>
            <person name="Koesema E."/>
            <person name="Ishida J."/>
            <person name="Jiang P.X."/>
            <person name="Jones T."/>
            <person name="Kawai J."/>
            <person name="Kamiya A."/>
            <person name="Meyers C."/>
            <person name="Nakajima M."/>
            <person name="Narusaka M."/>
            <person name="Seki M."/>
            <person name="Sakurai T."/>
            <person name="Satou M."/>
            <person name="Tamse R."/>
            <person name="Vaysberg M."/>
            <person name="Wallender E.K."/>
            <person name="Wong C."/>
            <person name="Yamamura Y."/>
            <person name="Yuan S."/>
            <person name="Shinozaki K."/>
            <person name="Davis R.W."/>
            <person name="Theologis A."/>
            <person name="Ecker J.R."/>
        </authorList>
    </citation>
    <scope>NUCLEOTIDE SEQUENCE [LARGE SCALE MRNA]</scope>
    <source>
        <strain>cv. Columbia</strain>
    </source>
</reference>
<reference key="5">
    <citation type="journal article" date="2002" name="J. Biol. Chem.">
        <title>Cloning and characterization of a low molecular weight prolyl 4-hydroxylase from Arabidopsis thaliana. Effective hydroxylation of proline-rich, collagen-like, and hypoxia-inducible transcription factor alpha-like peptides.</title>
        <authorList>
            <person name="Hieta R."/>
            <person name="Myllyharju J."/>
        </authorList>
    </citation>
    <scope>FUNCTION</scope>
    <scope>CATALYTIC ACTIVITY</scope>
    <scope>BIOPHYSICOCHEMICAL PROPERTIES</scope>
    <scope>MUTAGENESIS OF HIS-180; ASP-182; HIS-260; LYS-270; SER-272 AND ARG-278</scope>
</reference>
<reference key="6">
    <citation type="journal article" date="2007" name="Physiol. Plantarum">
        <title>Arabidopsis prolyl 4-hydroxylases are differentially expressed in response to hypoxia, anoxia and mechanical wounding.</title>
        <authorList>
            <person name="Vlad F."/>
            <person name="Spano T."/>
            <person name="Vlad D."/>
            <person name="Bou Daher F."/>
            <person name="Ouelhadj A."/>
            <person name="Kalaitzis P."/>
        </authorList>
    </citation>
    <scope>GENE FAMILY</scope>
    <scope>NOMENCLATURE</scope>
</reference>
<reference key="7">
    <citation type="journal article" date="2009" name="Funct. Integr. Genomics">
        <title>Prolyl-4-hydroxylase (AtP4H1) mediates and mimics low oxygen response in Arabidopsis thaliana.</title>
        <authorList>
            <person name="Asif M.H."/>
            <person name="Trivedi P.K."/>
            <person name="Misra P."/>
            <person name="Nath P."/>
        </authorList>
    </citation>
    <scope>FUNCTION</scope>
    <scope>INDUCTION BY HYPOXIA</scope>
</reference>
<evidence type="ECO:0000250" key="1">
    <source>
        <dbReference type="UniProtKB" id="Q24JN5"/>
    </source>
</evidence>
<evidence type="ECO:0000250" key="2">
    <source>
        <dbReference type="UniProtKB" id="Q86KR9"/>
    </source>
</evidence>
<evidence type="ECO:0000255" key="3"/>
<evidence type="ECO:0000255" key="4">
    <source>
        <dbReference type="PROSITE-ProRule" id="PRU00805"/>
    </source>
</evidence>
<evidence type="ECO:0000269" key="5">
    <source>
    </source>
</evidence>
<evidence type="ECO:0000269" key="6">
    <source>
    </source>
</evidence>
<evidence type="ECO:0000303" key="7">
    <source>
    </source>
</evidence>
<evidence type="ECO:0000303" key="8">
    <source ref="6"/>
</evidence>
<evidence type="ECO:0000305" key="9"/>
<evidence type="ECO:0000305" key="10">
    <source>
    </source>
</evidence>
<dbReference type="EC" id="1.14.11.2" evidence="5"/>
<dbReference type="EMBL" id="AC004450">
    <property type="protein sequence ID" value="AAC64297.1"/>
    <property type="molecule type" value="Genomic_DNA"/>
</dbReference>
<dbReference type="EMBL" id="AC006224">
    <property type="protein sequence ID" value="AAM15158.1"/>
    <property type="molecule type" value="Genomic_DNA"/>
</dbReference>
<dbReference type="EMBL" id="CP002685">
    <property type="protein sequence ID" value="AEC10206.1"/>
    <property type="molecule type" value="Genomic_DNA"/>
</dbReference>
<dbReference type="EMBL" id="AK117688">
    <property type="protein sequence ID" value="BAC42340.1"/>
    <property type="molecule type" value="mRNA"/>
</dbReference>
<dbReference type="EMBL" id="BT006098">
    <property type="protein sequence ID" value="AAP04083.1"/>
    <property type="molecule type" value="mRNA"/>
</dbReference>
<dbReference type="PIR" id="G84861">
    <property type="entry name" value="G84861"/>
</dbReference>
<dbReference type="SMR" id="Q9ZW86"/>
<dbReference type="FunCoup" id="Q9ZW86">
    <property type="interactions" value="385"/>
</dbReference>
<dbReference type="STRING" id="3702.Q9ZW86"/>
<dbReference type="PaxDb" id="3702-AT2G43080.1"/>
<dbReference type="ProteomicsDB" id="248812"/>
<dbReference type="EnsemblPlants" id="AT2G43080.1">
    <property type="protein sequence ID" value="AT2G43080.1"/>
    <property type="gene ID" value="AT2G43080"/>
</dbReference>
<dbReference type="Gramene" id="AT2G43080.1">
    <property type="protein sequence ID" value="AT2G43080.1"/>
    <property type="gene ID" value="AT2G43080"/>
</dbReference>
<dbReference type="KEGG" id="ath:AT2G43080"/>
<dbReference type="Araport" id="AT2G43080"/>
<dbReference type="TAIR" id="AT2G43080">
    <property type="gene designation" value="AT-P4H-1"/>
</dbReference>
<dbReference type="eggNOG" id="KOG1591">
    <property type="taxonomic scope" value="Eukaryota"/>
</dbReference>
<dbReference type="HOGENOM" id="CLU_058132_2_0_1"/>
<dbReference type="InParanoid" id="Q9ZW86"/>
<dbReference type="OMA" id="TVQCIEQ"/>
<dbReference type="PhylomeDB" id="Q9ZW86"/>
<dbReference type="BioCyc" id="ARA:AT2G43080-MONOMER"/>
<dbReference type="BRENDA" id="1.14.11.2">
    <property type="organism ID" value="399"/>
</dbReference>
<dbReference type="SABIO-RK" id="Q9ZW86"/>
<dbReference type="PRO" id="PR:Q9ZW86"/>
<dbReference type="Proteomes" id="UP000006548">
    <property type="component" value="Chromosome 2"/>
</dbReference>
<dbReference type="ExpressionAtlas" id="Q9ZW86">
    <property type="expression patterns" value="baseline and differential"/>
</dbReference>
<dbReference type="GO" id="GO:0005789">
    <property type="term" value="C:endoplasmic reticulum membrane"/>
    <property type="evidence" value="ECO:0007669"/>
    <property type="project" value="UniProtKB-SubCell"/>
</dbReference>
<dbReference type="GO" id="GO:0005794">
    <property type="term" value="C:Golgi apparatus"/>
    <property type="evidence" value="ECO:0007005"/>
    <property type="project" value="TAIR"/>
</dbReference>
<dbReference type="GO" id="GO:0000137">
    <property type="term" value="C:Golgi cis cisterna"/>
    <property type="evidence" value="ECO:0000314"/>
    <property type="project" value="TAIR"/>
</dbReference>
<dbReference type="GO" id="GO:0005506">
    <property type="term" value="F:iron ion binding"/>
    <property type="evidence" value="ECO:0007669"/>
    <property type="project" value="InterPro"/>
</dbReference>
<dbReference type="GO" id="GO:0031418">
    <property type="term" value="F:L-ascorbic acid binding"/>
    <property type="evidence" value="ECO:0007669"/>
    <property type="project" value="InterPro"/>
</dbReference>
<dbReference type="GO" id="GO:0004656">
    <property type="term" value="F:procollagen-proline 4-dioxygenase activity"/>
    <property type="evidence" value="ECO:0000314"/>
    <property type="project" value="TAIR"/>
</dbReference>
<dbReference type="GO" id="GO:0018401">
    <property type="term" value="P:peptidyl-proline hydroxylation to 4-hydroxy-L-proline"/>
    <property type="evidence" value="ECO:0000314"/>
    <property type="project" value="TAIR"/>
</dbReference>
<dbReference type="FunFam" id="2.60.120.620:FF:000015">
    <property type="entry name" value="Prolyl 4-hydroxylase 1"/>
    <property type="match status" value="1"/>
</dbReference>
<dbReference type="Gene3D" id="2.60.120.620">
    <property type="entry name" value="q2cbj1_9rhob like domain"/>
    <property type="match status" value="1"/>
</dbReference>
<dbReference type="InterPro" id="IPR005123">
    <property type="entry name" value="Oxoglu/Fe-dep_dioxygenase_dom"/>
</dbReference>
<dbReference type="InterPro" id="IPR045054">
    <property type="entry name" value="P4HA-like"/>
</dbReference>
<dbReference type="InterPro" id="IPR006620">
    <property type="entry name" value="Pro_4_hyd_alph"/>
</dbReference>
<dbReference type="InterPro" id="IPR044862">
    <property type="entry name" value="Pro_4_hyd_alph_FE2OG_OXY"/>
</dbReference>
<dbReference type="PANTHER" id="PTHR10869:SF42">
    <property type="entry name" value="PROLYL 4-HYDROXYLASE 1"/>
    <property type="match status" value="1"/>
</dbReference>
<dbReference type="PANTHER" id="PTHR10869">
    <property type="entry name" value="PROLYL 4-HYDROXYLASE ALPHA SUBUNIT"/>
    <property type="match status" value="1"/>
</dbReference>
<dbReference type="Pfam" id="PF13640">
    <property type="entry name" value="2OG-FeII_Oxy_3"/>
    <property type="match status" value="1"/>
</dbReference>
<dbReference type="SMART" id="SM00702">
    <property type="entry name" value="P4Hc"/>
    <property type="match status" value="1"/>
</dbReference>
<dbReference type="PROSITE" id="PS51471">
    <property type="entry name" value="FE2OG_OXY"/>
    <property type="match status" value="1"/>
</dbReference>
<gene>
    <name evidence="8" type="primary">P4H1</name>
    <name type="ordered locus">At2g43080</name>
    <name type="ORF">MFL8</name>
</gene>
<organism>
    <name type="scientific">Arabidopsis thaliana</name>
    <name type="common">Mouse-ear cress</name>
    <dbReference type="NCBI Taxonomy" id="3702"/>
    <lineage>
        <taxon>Eukaryota</taxon>
        <taxon>Viridiplantae</taxon>
        <taxon>Streptophyta</taxon>
        <taxon>Embryophyta</taxon>
        <taxon>Tracheophyta</taxon>
        <taxon>Spermatophyta</taxon>
        <taxon>Magnoliopsida</taxon>
        <taxon>eudicotyledons</taxon>
        <taxon>Gunneridae</taxon>
        <taxon>Pentapetalae</taxon>
        <taxon>rosids</taxon>
        <taxon>malvids</taxon>
        <taxon>Brassicales</taxon>
        <taxon>Brassicaceae</taxon>
        <taxon>Camelineae</taxon>
        <taxon>Arabidopsis</taxon>
    </lineage>
</organism>
<sequence length="283" mass="31530">MAPAMKIVFGLLTFVTVGMVIGSLLQLAFINRLEDSYGTGFPSLRGLRGQNTRYLRDVSRWANDKDAELLRIGNVKPEVVSWSPRIIVLHDFLSPEECEYLKAIARPRLQVSTVVDVKTGKGVKSDVRTSSGMFLTHVERSYPIIQAIEKRIAVFSQVPAENGELIQVLRYEPQQFYKPHHDYFADTFNLKRGGQRVATMLMYLTDDVEGGETYFPLAGDGDCTCGGKIMKGISVKPTKGDAVLFWSMGLDGQSDPRSIHGGCEVLSGEKWSATKWMRQKATS</sequence>
<accession>Q9ZW86</accession>
<proteinExistence type="evidence at protein level"/>
<keyword id="KW-0223">Dioxygenase</keyword>
<keyword id="KW-0256">Endoplasmic reticulum</keyword>
<keyword id="KW-0408">Iron</keyword>
<keyword id="KW-0472">Membrane</keyword>
<keyword id="KW-0479">Metal-binding</keyword>
<keyword id="KW-0560">Oxidoreductase</keyword>
<keyword id="KW-1185">Reference proteome</keyword>
<keyword id="KW-0735">Signal-anchor</keyword>
<keyword id="KW-0812">Transmembrane</keyword>
<keyword id="KW-1133">Transmembrane helix</keyword>
<comment type="function">
    <text evidence="5 6">Catalyzes the post-translational formation of 4-hydroxyproline in -Xaa-Pro-Gly- sequences in proline-rich peptide sequences of plant glycoproteins and other proteins. Hydroxylates preferentially prolines in second positions in the -Pro-Pro-Gly-triplets. Hydroxyprolines are important constituent of many plant cell wall glycoproteins such as extensins, hydroxyproline-rich glycoproteins, lectins and arabinogalactan proteins. Can hydroxylate collagen-like peptides and hypoxia-inducible transcription factor peptides.</text>
</comment>
<comment type="catalytic activity">
    <reaction evidence="5">
        <text>L-prolyl-[collagen] + 2-oxoglutarate + O2 = trans-4-hydroxy-L-prolyl-[collagen] + succinate + CO2</text>
        <dbReference type="Rhea" id="RHEA:18945"/>
        <dbReference type="Rhea" id="RHEA-COMP:11676"/>
        <dbReference type="Rhea" id="RHEA-COMP:11680"/>
        <dbReference type="ChEBI" id="CHEBI:15379"/>
        <dbReference type="ChEBI" id="CHEBI:16526"/>
        <dbReference type="ChEBI" id="CHEBI:16810"/>
        <dbReference type="ChEBI" id="CHEBI:30031"/>
        <dbReference type="ChEBI" id="CHEBI:50342"/>
        <dbReference type="ChEBI" id="CHEBI:61965"/>
        <dbReference type="EC" id="1.14.11.2"/>
    </reaction>
</comment>
<comment type="cofactor">
    <cofactor evidence="4">
        <name>Fe(2+)</name>
        <dbReference type="ChEBI" id="CHEBI:29033"/>
    </cofactor>
    <text evidence="4">Binds 1 Fe(2+) ion per subunit.</text>
</comment>
<comment type="cofactor">
    <cofactor evidence="2">
        <name>L-ascorbate</name>
        <dbReference type="ChEBI" id="CHEBI:38290"/>
    </cofactor>
</comment>
<comment type="biophysicochemical properties">
    <kinetics>
        <KM evidence="5">130 uM for 2-oxoglutarate</KM>
        <KM evidence="5">2 uM for poly(L-proline) polypeptides of 5-10 kDa</KM>
        <KM evidence="5">0.2 uM for poly(L-proline) polypeptides of 10-20 kDa</KM>
        <KM evidence="5">60 uM for (Ala-Thr-Pro-Pro-Pro-Val)3 peptide present in arabinogalactan protein</KM>
        <KM evidence="5">10 uM for Ser-Pro-Pro-Pro-Pro-Val-Ser-Pro-Pro-Pro-Val-Ser-Pro-Pro-Pro-Pro-Val peptide present in extensin protein</KM>
        <KM evidence="5">40 uM for Ser-Pro-Pro-Pro-Val-Tyr-Lys-Ser-Pro-Pro-Pro-Pro-Val-Lys-His-Tyr-Ser-Pro-Pro-Pro-Val peptide present in extensin protein</KM>
        <KM evidence="5">60 uM for (Pro-Pro-Gly)10</KM>
        <KM evidence="5">120 uM for (Pro-Pro-Gly)5</KM>
        <KM evidence="5">100 uM for (Ala-Pro-Gly)5</KM>
        <KM evidence="5">280 uM for (Pro-Ala-Gly)5</KM>
    </kinetics>
</comment>
<comment type="subcellular location">
    <subcellularLocation>
        <location evidence="1">Endoplasmic reticulum membrane</location>
        <topology evidence="1">Single-pass type II membrane protein</topology>
    </subcellularLocation>
</comment>
<comment type="induction">
    <text evidence="6">By hypoxia.</text>
</comment>
<comment type="miscellaneous">
    <text evidence="10">Plants over-expressing P4H1 show absence of trichome on leaf and petal surfaces, increased root hair and reduction in seed size.</text>
</comment>
<comment type="similarity">
    <text evidence="9">Belongs to the P4HA family.</text>
</comment>
<feature type="chain" id="PRO_0000429335" description="Prolyl 4-hydroxylase 1">
    <location>
        <begin position="1"/>
        <end position="283"/>
    </location>
</feature>
<feature type="topological domain" description="Cytoplasmic" evidence="9">
    <location>
        <begin position="1"/>
        <end position="6"/>
    </location>
</feature>
<feature type="transmembrane region" description="Helical; Signal-anchor for type II membrane protein" evidence="3">
    <location>
        <begin position="7"/>
        <end position="27"/>
    </location>
</feature>
<feature type="topological domain" description="Lumenal" evidence="9">
    <location>
        <begin position="28"/>
        <end position="283"/>
    </location>
</feature>
<feature type="domain" description="Fe2OG dioxygenase" evidence="4">
    <location>
        <begin position="162"/>
        <end position="279"/>
    </location>
</feature>
<feature type="binding site" evidence="4">
    <location>
        <position position="180"/>
    </location>
    <ligand>
        <name>Fe cation</name>
        <dbReference type="ChEBI" id="CHEBI:24875"/>
    </ligand>
</feature>
<feature type="binding site" evidence="4">
    <location>
        <position position="182"/>
    </location>
    <ligand>
        <name>Fe cation</name>
        <dbReference type="ChEBI" id="CHEBI:24875"/>
    </ligand>
</feature>
<feature type="binding site" evidence="4">
    <location>
        <position position="260"/>
    </location>
    <ligand>
        <name>Fe cation</name>
        <dbReference type="ChEBI" id="CHEBI:24875"/>
    </ligand>
</feature>
<feature type="binding site" evidence="4">
    <location>
        <position position="270"/>
    </location>
    <ligand>
        <name>2-oxoglutarate</name>
        <dbReference type="ChEBI" id="CHEBI:16810"/>
    </ligand>
</feature>
<feature type="mutagenesis site" description="Reduces activity more than 500-fold." evidence="5">
    <original>H</original>
    <variation>A</variation>
    <location>
        <position position="180"/>
    </location>
</feature>
<feature type="mutagenesis site" description="Reduces activity more than 500-fold." evidence="5">
    <original>H</original>
    <variation>E</variation>
    <location>
        <position position="180"/>
    </location>
</feature>
<feature type="mutagenesis site" description="Reduces activity more than 500-fold." evidence="5">
    <original>D</original>
    <variation>A</variation>
    <location>
        <position position="182"/>
    </location>
</feature>
<feature type="mutagenesis site" description="Reduces activity more than 500-fold." evidence="5">
    <original>D</original>
    <variation>E</variation>
    <location>
        <position position="182"/>
    </location>
</feature>
<feature type="mutagenesis site" description="Reduces activity more than 500-fold." evidence="5">
    <original>H</original>
    <variation>A</variation>
    <location>
        <position position="260"/>
    </location>
</feature>
<feature type="mutagenesis site" description="Reduces activity more than 500-fold." evidence="5">
    <original>H</original>
    <variation>E</variation>
    <location>
        <position position="260"/>
    </location>
</feature>
<feature type="mutagenesis site" description="Reduces activity more than 500-fold." evidence="5">
    <original>K</original>
    <variation>A</variation>
    <location>
        <position position="270"/>
    </location>
</feature>
<feature type="mutagenesis site" description="Reduces activity more than 500-fold." evidence="5">
    <original>K</original>
    <variation>R</variation>
    <location>
        <position position="270"/>
    </location>
</feature>
<feature type="mutagenesis site" description="Reduces activity 6-fold." evidence="5">
    <original>S</original>
    <variation>A</variation>
    <location>
        <position position="272"/>
    </location>
</feature>
<feature type="mutagenesis site" description="Reduces activity more than 500-fold." evidence="5">
    <original>R</original>
    <variation>A</variation>
    <location>
        <position position="278"/>
    </location>
</feature>
<feature type="mutagenesis site" description="Reduces activity 4-fold." evidence="5">
    <original>R</original>
    <variation>H</variation>
    <location>
        <position position="278"/>
    </location>
</feature>
<name>P4H1_ARATH</name>
<protein>
    <recommendedName>
        <fullName evidence="9">Prolyl 4-hydroxylase 1</fullName>
        <shortName evidence="7">AtP4H-1</shortName>
        <shortName evidence="8">AtP4H1</shortName>
        <ecNumber evidence="5">1.14.11.2</ecNumber>
    </recommendedName>
</protein>